<comment type="function">
    <text evidence="1">Catalyzes the transfer of adenosine 5'-monophosphate (AMP) to Tyr residues of target mitochondrial proteins (AMPylation). Involved in redox homeostasis by regulating the cellular response to oxidative stress. Regulates protein S-glutathionylation levels possibly by AMPylation of deglutathionylation enzymes such as glutaredoxins.</text>
</comment>
<comment type="catalytic activity">
    <reaction evidence="1">
        <text>L-tyrosyl-[protein] + ATP = O-(5'-adenylyl)-L-tyrosyl-[protein] + diphosphate</text>
        <dbReference type="Rhea" id="RHEA:54288"/>
        <dbReference type="Rhea" id="RHEA-COMP:10136"/>
        <dbReference type="Rhea" id="RHEA-COMP:13846"/>
        <dbReference type="ChEBI" id="CHEBI:30616"/>
        <dbReference type="ChEBI" id="CHEBI:33019"/>
        <dbReference type="ChEBI" id="CHEBI:46858"/>
        <dbReference type="ChEBI" id="CHEBI:83624"/>
    </reaction>
    <physiologicalReaction direction="left-to-right" evidence="1">
        <dbReference type="Rhea" id="RHEA:54289"/>
    </physiologicalReaction>
</comment>
<comment type="cofactor">
    <cofactor evidence="2">
        <name>Mg(2+)</name>
        <dbReference type="ChEBI" id="CHEBI:18420"/>
    </cofactor>
</comment>
<comment type="subcellular location">
    <subcellularLocation>
        <location evidence="1">Mitochondrion</location>
    </subcellularLocation>
</comment>
<comment type="PTM">
    <text evidence="1">Forms probably one or more intrachain disulfide bridges.</text>
</comment>
<comment type="similarity">
    <text evidence="3">Belongs to the SELO family.</text>
</comment>
<organism>
    <name type="scientific">Schizosaccharomyces pombe (strain 972 / ATCC 24843)</name>
    <name type="common">Fission yeast</name>
    <dbReference type="NCBI Taxonomy" id="284812"/>
    <lineage>
        <taxon>Eukaryota</taxon>
        <taxon>Fungi</taxon>
        <taxon>Dikarya</taxon>
        <taxon>Ascomycota</taxon>
        <taxon>Taphrinomycotina</taxon>
        <taxon>Schizosaccharomycetes</taxon>
        <taxon>Schizosaccharomycetales</taxon>
        <taxon>Schizosaccharomycetaceae</taxon>
        <taxon>Schizosaccharomyces</taxon>
    </lineage>
</organism>
<sequence length="568" mass="63951">MSKKLKDLPVSSTFTSNLPPDPLVPTVQAMKKADDRILHVPRFVEGGGLFTYLTPSLKANSQLLAYSPSSVKSLGLEESETQTEAFQQLVVGSNVDVNKCCPWAQCYGGYQFGDWAGQLGDGRVVSLCELTNPETGKRFEIQVKGAGRTPYSRFADGKAVLRSSIREYLCCEALYALGIPTTQALAISNLEGVVAQRETVEPCAVVCRMAPSWIRIGTFDLQGINNQIESLRKLADYCLNFVLKDGFHGGDTGNRYEKLLRDVAYRNAKTVAKWQAYGFMNGVLNTDNTSILGLSIDYGPFGFLDVYNPSFTPNHDDVFLRYSYRNQPDIIIWNLSKLASALVELIGACDKVDDLQYMEQLHNSTDLLKKAFAYTSEVFEKIVEEYKNIVQNDFYDLMFKRVGLPSDSSNKILITDLLQILEDYELDMPNCFSFLSRNSPSSMENEEYAAKLMQACICLNPNNERVRNESVKAFTNWVGRYSEATKTQEDSSRLASMKKVNPHFTLRNWVLEEVIKEAYIGKFELFKKVCKMAACPFEDTWGFSKEEEDYLCYNTTPSKSQIQCSCSS</sequence>
<evidence type="ECO:0000250" key="1">
    <source>
        <dbReference type="UniProtKB" id="Q08968"/>
    </source>
</evidence>
<evidence type="ECO:0000250" key="2">
    <source>
        <dbReference type="UniProtKB" id="Q87VB1"/>
    </source>
</evidence>
<evidence type="ECO:0000305" key="3"/>
<keyword id="KW-0067">ATP-binding</keyword>
<keyword id="KW-1015">Disulfide bond</keyword>
<keyword id="KW-0460">Magnesium</keyword>
<keyword id="KW-0479">Metal-binding</keyword>
<keyword id="KW-0496">Mitochondrion</keyword>
<keyword id="KW-0547">Nucleotide-binding</keyword>
<keyword id="KW-0548">Nucleotidyltransferase</keyword>
<keyword id="KW-1185">Reference proteome</keyword>
<keyword id="KW-0808">Transferase</keyword>
<keyword id="KW-0809">Transit peptide</keyword>
<proteinExistence type="inferred from homology"/>
<gene>
    <name type="ORF">SPAC20G4.05c</name>
</gene>
<accession>O13890</accession>
<reference key="1">
    <citation type="journal article" date="2002" name="Nature">
        <title>The genome sequence of Schizosaccharomyces pombe.</title>
        <authorList>
            <person name="Wood V."/>
            <person name="Gwilliam R."/>
            <person name="Rajandream M.A."/>
            <person name="Lyne M.H."/>
            <person name="Lyne R."/>
            <person name="Stewart A."/>
            <person name="Sgouros J.G."/>
            <person name="Peat N."/>
            <person name="Hayles J."/>
            <person name="Baker S.G."/>
            <person name="Basham D."/>
            <person name="Bowman S."/>
            <person name="Brooks K."/>
            <person name="Brown D."/>
            <person name="Brown S."/>
            <person name="Chillingworth T."/>
            <person name="Churcher C.M."/>
            <person name="Collins M."/>
            <person name="Connor R."/>
            <person name="Cronin A."/>
            <person name="Davis P."/>
            <person name="Feltwell T."/>
            <person name="Fraser A."/>
            <person name="Gentles S."/>
            <person name="Goble A."/>
            <person name="Hamlin N."/>
            <person name="Harris D.E."/>
            <person name="Hidalgo J."/>
            <person name="Hodgson G."/>
            <person name="Holroyd S."/>
            <person name="Hornsby T."/>
            <person name="Howarth S."/>
            <person name="Huckle E.J."/>
            <person name="Hunt S."/>
            <person name="Jagels K."/>
            <person name="James K.D."/>
            <person name="Jones L."/>
            <person name="Jones M."/>
            <person name="Leather S."/>
            <person name="McDonald S."/>
            <person name="McLean J."/>
            <person name="Mooney P."/>
            <person name="Moule S."/>
            <person name="Mungall K.L."/>
            <person name="Murphy L.D."/>
            <person name="Niblett D."/>
            <person name="Odell C."/>
            <person name="Oliver K."/>
            <person name="O'Neil S."/>
            <person name="Pearson D."/>
            <person name="Quail M.A."/>
            <person name="Rabbinowitsch E."/>
            <person name="Rutherford K.M."/>
            <person name="Rutter S."/>
            <person name="Saunders D."/>
            <person name="Seeger K."/>
            <person name="Sharp S."/>
            <person name="Skelton J."/>
            <person name="Simmonds M.N."/>
            <person name="Squares R."/>
            <person name="Squares S."/>
            <person name="Stevens K."/>
            <person name="Taylor K."/>
            <person name="Taylor R.G."/>
            <person name="Tivey A."/>
            <person name="Walsh S.V."/>
            <person name="Warren T."/>
            <person name="Whitehead S."/>
            <person name="Woodward J.R."/>
            <person name="Volckaert G."/>
            <person name="Aert R."/>
            <person name="Robben J."/>
            <person name="Grymonprez B."/>
            <person name="Weltjens I."/>
            <person name="Vanstreels E."/>
            <person name="Rieger M."/>
            <person name="Schaefer M."/>
            <person name="Mueller-Auer S."/>
            <person name="Gabel C."/>
            <person name="Fuchs M."/>
            <person name="Duesterhoeft A."/>
            <person name="Fritzc C."/>
            <person name="Holzer E."/>
            <person name="Moestl D."/>
            <person name="Hilbert H."/>
            <person name="Borzym K."/>
            <person name="Langer I."/>
            <person name="Beck A."/>
            <person name="Lehrach H."/>
            <person name="Reinhardt R."/>
            <person name="Pohl T.M."/>
            <person name="Eger P."/>
            <person name="Zimmermann W."/>
            <person name="Wedler H."/>
            <person name="Wambutt R."/>
            <person name="Purnelle B."/>
            <person name="Goffeau A."/>
            <person name="Cadieu E."/>
            <person name="Dreano S."/>
            <person name="Gloux S."/>
            <person name="Lelaure V."/>
            <person name="Mottier S."/>
            <person name="Galibert F."/>
            <person name="Aves S.J."/>
            <person name="Xiang Z."/>
            <person name="Hunt C."/>
            <person name="Moore K."/>
            <person name="Hurst S.M."/>
            <person name="Lucas M."/>
            <person name="Rochet M."/>
            <person name="Gaillardin C."/>
            <person name="Tallada V.A."/>
            <person name="Garzon A."/>
            <person name="Thode G."/>
            <person name="Daga R.R."/>
            <person name="Cruzado L."/>
            <person name="Jimenez J."/>
            <person name="Sanchez M."/>
            <person name="del Rey F."/>
            <person name="Benito J."/>
            <person name="Dominguez A."/>
            <person name="Revuelta J.L."/>
            <person name="Moreno S."/>
            <person name="Armstrong J."/>
            <person name="Forsburg S.L."/>
            <person name="Cerutti L."/>
            <person name="Lowe T."/>
            <person name="McCombie W.R."/>
            <person name="Paulsen I."/>
            <person name="Potashkin J."/>
            <person name="Shpakovski G.V."/>
            <person name="Ussery D."/>
            <person name="Barrell B.G."/>
            <person name="Nurse P."/>
        </authorList>
    </citation>
    <scope>NUCLEOTIDE SEQUENCE [LARGE SCALE GENOMIC DNA]</scope>
    <source>
        <strain>972 / ATCC 24843</strain>
    </source>
</reference>
<dbReference type="EC" id="2.7.7.-" evidence="1"/>
<dbReference type="EMBL" id="CU329670">
    <property type="protein sequence ID" value="CAB11255.1"/>
    <property type="molecule type" value="Genomic_DNA"/>
</dbReference>
<dbReference type="PIR" id="T38119">
    <property type="entry name" value="T38119"/>
</dbReference>
<dbReference type="SMR" id="O13890"/>
<dbReference type="FunCoup" id="O13890">
    <property type="interactions" value="62"/>
</dbReference>
<dbReference type="STRING" id="284812.O13890"/>
<dbReference type="SwissPalm" id="O13890"/>
<dbReference type="PaxDb" id="4896-SPAC20G4.05c.1"/>
<dbReference type="EnsemblFungi" id="SPAC20G4.05c.1">
    <property type="protein sequence ID" value="SPAC20G4.05c.1:pep"/>
    <property type="gene ID" value="SPAC20G4.05c"/>
</dbReference>
<dbReference type="KEGG" id="spo:2541666"/>
<dbReference type="PomBase" id="SPAC20G4.05c"/>
<dbReference type="VEuPathDB" id="FungiDB:SPAC20G4.05c"/>
<dbReference type="eggNOG" id="KOG2542">
    <property type="taxonomic scope" value="Eukaryota"/>
</dbReference>
<dbReference type="HOGENOM" id="CLU_010245_2_1_1"/>
<dbReference type="InParanoid" id="O13890"/>
<dbReference type="OMA" id="YGPYGWL"/>
<dbReference type="PhylomeDB" id="O13890"/>
<dbReference type="PRO" id="PR:O13890"/>
<dbReference type="Proteomes" id="UP000002485">
    <property type="component" value="Chromosome I"/>
</dbReference>
<dbReference type="GO" id="GO:0005739">
    <property type="term" value="C:mitochondrion"/>
    <property type="evidence" value="ECO:0000318"/>
    <property type="project" value="GO_Central"/>
</dbReference>
<dbReference type="GO" id="GO:0070733">
    <property type="term" value="F:AMPylase activity"/>
    <property type="evidence" value="ECO:0000318"/>
    <property type="project" value="GO_Central"/>
</dbReference>
<dbReference type="GO" id="GO:0005524">
    <property type="term" value="F:ATP binding"/>
    <property type="evidence" value="ECO:0007669"/>
    <property type="project" value="UniProtKB-KW"/>
</dbReference>
<dbReference type="GO" id="GO:0046872">
    <property type="term" value="F:metal ion binding"/>
    <property type="evidence" value="ECO:0007669"/>
    <property type="project" value="UniProtKB-KW"/>
</dbReference>
<dbReference type="GO" id="GO:0098869">
    <property type="term" value="P:cellular oxidant detoxification"/>
    <property type="evidence" value="ECO:0000305"/>
    <property type="project" value="PomBase"/>
</dbReference>
<dbReference type="HAMAP" id="MF_00692">
    <property type="entry name" value="YdiU_SelO"/>
    <property type="match status" value="1"/>
</dbReference>
<dbReference type="InterPro" id="IPR003846">
    <property type="entry name" value="SelO"/>
</dbReference>
<dbReference type="PANTHER" id="PTHR32057">
    <property type="entry name" value="PROTEIN ADENYLYLTRANSFERASE SELO, MITOCHONDRIAL"/>
    <property type="match status" value="1"/>
</dbReference>
<dbReference type="PANTHER" id="PTHR32057:SF14">
    <property type="entry name" value="PROTEIN ADENYLYLTRANSFERASE SELO, MITOCHONDRIAL"/>
    <property type="match status" value="1"/>
</dbReference>
<dbReference type="Pfam" id="PF02696">
    <property type="entry name" value="SelO"/>
    <property type="match status" value="1"/>
</dbReference>
<feature type="transit peptide" description="Mitochondrion" evidence="3">
    <location>
        <begin position="1"/>
        <end status="unknown"/>
    </location>
</feature>
<feature type="chain" id="PRO_0000121402" description="Protein adenylyltransferase SelO, mitochondrial">
    <location>
        <begin status="unknown"/>
        <end position="568"/>
    </location>
</feature>
<feature type="active site" description="Proton acceptor" evidence="2">
    <location>
        <position position="287"/>
    </location>
</feature>
<feature type="binding site" evidence="2">
    <location>
        <position position="120"/>
    </location>
    <ligand>
        <name>ATP</name>
        <dbReference type="ChEBI" id="CHEBI:30616"/>
    </ligand>
</feature>
<feature type="binding site" evidence="2">
    <location>
        <position position="122"/>
    </location>
    <ligand>
        <name>ATP</name>
        <dbReference type="ChEBI" id="CHEBI:30616"/>
    </ligand>
</feature>
<feature type="binding site" evidence="2">
    <location>
        <position position="123"/>
    </location>
    <ligand>
        <name>ATP</name>
        <dbReference type="ChEBI" id="CHEBI:30616"/>
    </ligand>
</feature>
<feature type="binding site" evidence="2">
    <location>
        <position position="144"/>
    </location>
    <ligand>
        <name>ATP</name>
        <dbReference type="ChEBI" id="CHEBI:30616"/>
    </ligand>
</feature>
<feature type="binding site" evidence="2">
    <location>
        <position position="156"/>
    </location>
    <ligand>
        <name>ATP</name>
        <dbReference type="ChEBI" id="CHEBI:30616"/>
    </ligand>
</feature>
<feature type="binding site" evidence="2">
    <location>
        <position position="157"/>
    </location>
    <ligand>
        <name>ATP</name>
        <dbReference type="ChEBI" id="CHEBI:30616"/>
    </ligand>
</feature>
<feature type="binding site" evidence="2">
    <location>
        <position position="208"/>
    </location>
    <ligand>
        <name>ATP</name>
        <dbReference type="ChEBI" id="CHEBI:30616"/>
    </ligand>
</feature>
<feature type="binding site" evidence="2">
    <location>
        <position position="215"/>
    </location>
    <ligand>
        <name>ATP</name>
        <dbReference type="ChEBI" id="CHEBI:30616"/>
    </ligand>
</feature>
<feature type="binding site" evidence="2">
    <location>
        <position position="288"/>
    </location>
    <ligand>
        <name>Mg(2+)</name>
        <dbReference type="ChEBI" id="CHEBI:18420"/>
    </ligand>
</feature>
<feature type="binding site" evidence="2">
    <location>
        <position position="297"/>
    </location>
    <ligand>
        <name>ATP</name>
        <dbReference type="ChEBI" id="CHEBI:30616"/>
    </ligand>
</feature>
<feature type="binding site" evidence="2">
    <location>
        <position position="297"/>
    </location>
    <ligand>
        <name>Mg(2+)</name>
        <dbReference type="ChEBI" id="CHEBI:18420"/>
    </ligand>
</feature>
<protein>
    <recommendedName>
        <fullName evidence="3">Protein adenylyltransferase SelO, mitochondrial</fullName>
        <ecNumber evidence="1">2.7.7.-</ecNumber>
    </recommendedName>
    <alternativeName>
        <fullName evidence="1">Selenoprotein O</fullName>
        <shortName evidence="1">SelO</shortName>
    </alternativeName>
</protein>
<name>SELO_SCHPO</name>